<feature type="chain" id="PRO_0000391918" description="Probable ATP-dependent RNA helicase spindle-E">
    <location>
        <begin position="1"/>
        <end position="1434"/>
    </location>
</feature>
<feature type="domain" description="Helicase ATP-binding" evidence="3">
    <location>
        <begin position="126"/>
        <end position="295"/>
    </location>
</feature>
<feature type="domain" description="Helicase C-terminal" evidence="4">
    <location>
        <begin position="356"/>
        <end position="527"/>
    </location>
</feature>
<feature type="domain" description="Tudor" evidence="2">
    <location>
        <begin position="936"/>
        <end position="999"/>
    </location>
</feature>
<feature type="short sequence motif" description="DEAH box">
    <location>
        <begin position="241"/>
        <end position="244"/>
    </location>
</feature>
<feature type="binding site" evidence="3">
    <location>
        <begin position="139"/>
        <end position="146"/>
    </location>
    <ligand>
        <name>ATP</name>
        <dbReference type="ChEBI" id="CHEBI:30616"/>
    </ligand>
</feature>
<proteinExistence type="inferred from homology"/>
<organism>
    <name type="scientific">Drosophila persimilis</name>
    <name type="common">Fruit fly</name>
    <dbReference type="NCBI Taxonomy" id="7234"/>
    <lineage>
        <taxon>Eukaryota</taxon>
        <taxon>Metazoa</taxon>
        <taxon>Ecdysozoa</taxon>
        <taxon>Arthropoda</taxon>
        <taxon>Hexapoda</taxon>
        <taxon>Insecta</taxon>
        <taxon>Pterygota</taxon>
        <taxon>Neoptera</taxon>
        <taxon>Endopterygota</taxon>
        <taxon>Diptera</taxon>
        <taxon>Brachycera</taxon>
        <taxon>Muscomorpha</taxon>
        <taxon>Ephydroidea</taxon>
        <taxon>Drosophilidae</taxon>
        <taxon>Drosophila</taxon>
        <taxon>Sophophora</taxon>
    </lineage>
</organism>
<sequence length="1434" mass="164380">MDQELMDFFDFSKEFVRKQAPRGHVSSNVHAFVTESDELEKPIKREIVGKDYVKSFVEKEKKRMNGIFSSDEMASRRNKSLDDMDSDEEYEASPEIRTDAEFYEKYYFNLNRDKSLPIYAKREEIINAINENPVVIVKGETGCGKTTQVPPILFWMMVSKAKQYCNIVVTQPRRIAAISIANRVCQERQWQPGTVCGYQVGLHRQLERFADTRLLYCTTGVLLNILVNNKTLTHYTHIVLDEVHERGQEMDFLLIVIRRLLATNSRHVKVILMSATINPRELSDYFANESSAPPVIAASYGRNFTVEKYYRDQLQSINWEGHQEDINSPGITQEGYRSAIKTILVIDNMERNERGTGKSYNQSLREGSILIFLPGVGEINNMSDMLKDMANHDPIMKFNMVRCHSLMTSEDQREIFQPSPPGYRKIIMATNVAESSITVPDVSYIIDFCLEKVLVTDTSTNFSSLRLAWASKTNCRQRAGRVGRLRNGRVYRMVTKSFYQRELSEYSVPEMLRSPLQNCVLKAKELKMGTPVEMLALALSPPNLSDICNTILMLKEVGALFPTMDGTYDPRDGDITYWGTIMSKLPLDTHLSRLIILGYVFNLVDEAIIIAAGLTVRGIYIDSARLGADNYWMHYVFADGSGSDLVGIWRVYLTYLNMCENGLQKDASIQWAKRFHLSLRALSEMHLLVQDLRLRCEKLSLLPLNFPTHRISDDREKAIMLKVIIAGSFYPNYFVQSKSTSGDDRNMFSVISGLDPCRTVYFTSFTDRTMGELYTRKVKQLFPEAQIPPENMDVTFGQGSEKIFVTFKNDIYKPEGTTYVHVPGRIKAEVYKALRLRTYCNQHSLRVMEPMNALKYVKDKKIGKIVEGRWIPPSKPVAVELLALPSLFDKIIIGRITNIVSCGKFFFQPESFENCIANMSEHFNNPQQLQNCVRNAGAITKGLMLLAKRQGKYQRATVVRVDTQDSRNVRFYVRFVDYGDIERLPMAQLRLMSQDLLRHYRDLPPRLFECRLALVQPASMVSTYNAWPQKADDMLHALAKGGRVQLEIYSLVQNVAAVMIHLREGNLNELLVKEKLARRTDEDYMSRVDHDFRMRKQECRGYVSQQERQQVNEEYLRSKQLPQDMDLSPPPPEECNSLITLKGPFSTLESRVFSTMRSGMSKTVRIDPCSVNFVLLDTEPQDQHAKMVVAASISAAGRHNDVLTLRSTSIMPNIPGFAAIMTLIFCPRAQLKANTANSRYVSILAGIGYHPQTMQSYYEDHDLVINLDVNIDEHDVLLINQIRYMIDSAFFNLEGELHPTAGHADRVLIHNTIYPALNRLLSKNRNFIECNPNSSDYVWQDMEESGEPDPQPYGRRSIFPMHTIPELHEEKMDTVLDLIANCKEMYDYRNFEGSFDPMTCSLCKQYLESVAELRLHLLTQLHLDREKEVGYPID</sequence>
<accession>B4GEU5</accession>
<gene>
    <name type="primary">spn-E</name>
    <name type="synonym">hls</name>
    <name type="ORF">GL22075</name>
</gene>
<keyword id="KW-0067">ATP-binding</keyword>
<keyword id="KW-0963">Cytoplasm</keyword>
<keyword id="KW-0217">Developmental protein</keyword>
<keyword id="KW-0221">Differentiation</keyword>
<keyword id="KW-0347">Helicase</keyword>
<keyword id="KW-0378">Hydrolase</keyword>
<keyword id="KW-0469">Meiosis</keyword>
<keyword id="KW-0547">Nucleotide-binding</keyword>
<keyword id="KW-0896">Oogenesis</keyword>
<keyword id="KW-1185">Reference proteome</keyword>
<keyword id="KW-0943">RNA-mediated gene silencing</keyword>
<keyword id="KW-0744">Spermatogenesis</keyword>
<name>SPNE_DROPE</name>
<dbReference type="EC" id="3.6.4.13"/>
<dbReference type="EMBL" id="CH479182">
    <property type="protein sequence ID" value="EDW34130.1"/>
    <property type="molecule type" value="Genomic_DNA"/>
</dbReference>
<dbReference type="RefSeq" id="XP_002017030.1">
    <property type="nucleotide sequence ID" value="XM_002016994.1"/>
</dbReference>
<dbReference type="SMR" id="B4GEU5"/>
<dbReference type="STRING" id="7234.B4GEU5"/>
<dbReference type="EnsemblMetazoa" id="FBtr0187690">
    <property type="protein sequence ID" value="FBpp0186182"/>
    <property type="gene ID" value="FBgn0159667"/>
</dbReference>
<dbReference type="GeneID" id="6592096"/>
<dbReference type="KEGG" id="dpe:6592096"/>
<dbReference type="eggNOG" id="KOG0920">
    <property type="taxonomic scope" value="Eukaryota"/>
</dbReference>
<dbReference type="HOGENOM" id="CLU_002601_1_0_1"/>
<dbReference type="OMA" id="QRSAYCS"/>
<dbReference type="OrthoDB" id="66977at2759"/>
<dbReference type="PhylomeDB" id="B4GEU5"/>
<dbReference type="Proteomes" id="UP000008744">
    <property type="component" value="Unassembled WGS sequence"/>
</dbReference>
<dbReference type="GO" id="GO:0005634">
    <property type="term" value="C:nucleus"/>
    <property type="evidence" value="ECO:0007669"/>
    <property type="project" value="EnsemblMetazoa"/>
</dbReference>
<dbReference type="GO" id="GO:0043186">
    <property type="term" value="C:P granule"/>
    <property type="evidence" value="ECO:0007669"/>
    <property type="project" value="EnsemblMetazoa"/>
</dbReference>
<dbReference type="GO" id="GO:0005524">
    <property type="term" value="F:ATP binding"/>
    <property type="evidence" value="ECO:0007669"/>
    <property type="project" value="UniProtKB-KW"/>
</dbReference>
<dbReference type="GO" id="GO:0016887">
    <property type="term" value="F:ATP hydrolysis activity"/>
    <property type="evidence" value="ECO:0007669"/>
    <property type="project" value="RHEA"/>
</dbReference>
<dbReference type="GO" id="GO:0003723">
    <property type="term" value="F:RNA binding"/>
    <property type="evidence" value="ECO:0007669"/>
    <property type="project" value="TreeGrafter"/>
</dbReference>
<dbReference type="GO" id="GO:0003724">
    <property type="term" value="F:RNA helicase activity"/>
    <property type="evidence" value="ECO:0007669"/>
    <property type="project" value="UniProtKB-EC"/>
</dbReference>
<dbReference type="GO" id="GO:0046843">
    <property type="term" value="P:dorsal appendage formation"/>
    <property type="evidence" value="ECO:0007669"/>
    <property type="project" value="EnsemblMetazoa"/>
</dbReference>
<dbReference type="GO" id="GO:0007294">
    <property type="term" value="P:germarium-derived oocyte fate determination"/>
    <property type="evidence" value="ECO:0007669"/>
    <property type="project" value="EnsemblMetazoa"/>
</dbReference>
<dbReference type="GO" id="GO:0098795">
    <property type="term" value="P:global gene silencing by mRNA cleavage"/>
    <property type="evidence" value="ECO:0007669"/>
    <property type="project" value="EnsemblMetazoa"/>
</dbReference>
<dbReference type="GO" id="GO:0031507">
    <property type="term" value="P:heterochromatin formation"/>
    <property type="evidence" value="ECO:0007669"/>
    <property type="project" value="EnsemblMetazoa"/>
</dbReference>
<dbReference type="GO" id="GO:0008298">
    <property type="term" value="P:intracellular mRNA localization"/>
    <property type="evidence" value="ECO:0007669"/>
    <property type="project" value="EnsemblMetazoa"/>
</dbReference>
<dbReference type="GO" id="GO:0007076">
    <property type="term" value="P:mitotic chromosome condensation"/>
    <property type="evidence" value="ECO:0007669"/>
    <property type="project" value="EnsemblMetazoa"/>
</dbReference>
<dbReference type="GO" id="GO:0030717">
    <property type="term" value="P:oocyte karyosome formation"/>
    <property type="evidence" value="ECO:0007669"/>
    <property type="project" value="EnsemblMetazoa"/>
</dbReference>
<dbReference type="GO" id="GO:0030720">
    <property type="term" value="P:oocyte localization involved in germarium-derived egg chamber formation"/>
    <property type="evidence" value="ECO:0007669"/>
    <property type="project" value="EnsemblMetazoa"/>
</dbReference>
<dbReference type="GO" id="GO:0001556">
    <property type="term" value="P:oocyte maturation"/>
    <property type="evidence" value="ECO:0007669"/>
    <property type="project" value="EnsemblMetazoa"/>
</dbReference>
<dbReference type="GO" id="GO:0009949">
    <property type="term" value="P:polarity specification of anterior/posterior axis"/>
    <property type="evidence" value="ECO:0007669"/>
    <property type="project" value="EnsemblMetazoa"/>
</dbReference>
<dbReference type="GO" id="GO:0009951">
    <property type="term" value="P:polarity specification of dorsal/ventral axis"/>
    <property type="evidence" value="ECO:0007669"/>
    <property type="project" value="EnsemblMetazoa"/>
</dbReference>
<dbReference type="GO" id="GO:0007317">
    <property type="term" value="P:regulation of pole plasm oskar mRNA localization"/>
    <property type="evidence" value="ECO:0007669"/>
    <property type="project" value="EnsemblMetazoa"/>
</dbReference>
<dbReference type="GO" id="GO:0140965">
    <property type="term" value="P:secondary piRNA processing"/>
    <property type="evidence" value="ECO:0007669"/>
    <property type="project" value="EnsemblMetazoa"/>
</dbReference>
<dbReference type="GO" id="GO:0007283">
    <property type="term" value="P:spermatogenesis"/>
    <property type="evidence" value="ECO:0007669"/>
    <property type="project" value="UniProtKB-KW"/>
</dbReference>
<dbReference type="GO" id="GO:0141009">
    <property type="term" value="P:transposable element silencing by piRNA-mediated mRNA destabilization"/>
    <property type="evidence" value="ECO:0007669"/>
    <property type="project" value="EnsemblMetazoa"/>
</dbReference>
<dbReference type="CDD" id="cd18791">
    <property type="entry name" value="SF2_C_RHA"/>
    <property type="match status" value="1"/>
</dbReference>
<dbReference type="Gene3D" id="1.20.120.1080">
    <property type="match status" value="1"/>
</dbReference>
<dbReference type="Gene3D" id="2.30.30.140">
    <property type="match status" value="1"/>
</dbReference>
<dbReference type="Gene3D" id="2.40.50.90">
    <property type="match status" value="1"/>
</dbReference>
<dbReference type="Gene3D" id="3.40.50.300">
    <property type="entry name" value="P-loop containing nucleotide triphosphate hydrolases"/>
    <property type="match status" value="2"/>
</dbReference>
<dbReference type="InterPro" id="IPR011545">
    <property type="entry name" value="DEAD/DEAH_box_helicase_dom"/>
</dbReference>
<dbReference type="InterPro" id="IPR007502">
    <property type="entry name" value="Helicase-assoc_dom"/>
</dbReference>
<dbReference type="InterPro" id="IPR014001">
    <property type="entry name" value="Helicase_ATP-bd"/>
</dbReference>
<dbReference type="InterPro" id="IPR001650">
    <property type="entry name" value="Helicase_C-like"/>
</dbReference>
<dbReference type="InterPro" id="IPR027417">
    <property type="entry name" value="P-loop_NTPase"/>
</dbReference>
<dbReference type="InterPro" id="IPR035437">
    <property type="entry name" value="SNase_OB-fold_sf"/>
</dbReference>
<dbReference type="InterPro" id="IPR002999">
    <property type="entry name" value="Tudor"/>
</dbReference>
<dbReference type="InterPro" id="IPR013087">
    <property type="entry name" value="Znf_C2H2_type"/>
</dbReference>
<dbReference type="PANTHER" id="PTHR18934">
    <property type="entry name" value="ATP-DEPENDENT RNA HELICASE"/>
    <property type="match status" value="1"/>
</dbReference>
<dbReference type="PANTHER" id="PTHR18934:SF113">
    <property type="entry name" value="ATP-DEPENDENT RNA HELICASE TDRD9"/>
    <property type="match status" value="1"/>
</dbReference>
<dbReference type="Pfam" id="PF00270">
    <property type="entry name" value="DEAD"/>
    <property type="match status" value="1"/>
</dbReference>
<dbReference type="Pfam" id="PF00271">
    <property type="entry name" value="Helicase_C"/>
    <property type="match status" value="1"/>
</dbReference>
<dbReference type="Pfam" id="PF00567">
    <property type="entry name" value="TUDOR"/>
    <property type="match status" value="1"/>
</dbReference>
<dbReference type="SMART" id="SM00487">
    <property type="entry name" value="DEXDc"/>
    <property type="match status" value="1"/>
</dbReference>
<dbReference type="SMART" id="SM00847">
    <property type="entry name" value="HA2"/>
    <property type="match status" value="1"/>
</dbReference>
<dbReference type="SMART" id="SM00490">
    <property type="entry name" value="HELICc"/>
    <property type="match status" value="1"/>
</dbReference>
<dbReference type="SMART" id="SM00333">
    <property type="entry name" value="TUDOR"/>
    <property type="match status" value="1"/>
</dbReference>
<dbReference type="SUPFAM" id="SSF52540">
    <property type="entry name" value="P-loop containing nucleoside triphosphate hydrolases"/>
    <property type="match status" value="1"/>
</dbReference>
<dbReference type="SUPFAM" id="SSF63748">
    <property type="entry name" value="Tudor/PWWP/MBT"/>
    <property type="match status" value="1"/>
</dbReference>
<dbReference type="PROSITE" id="PS51192">
    <property type="entry name" value="HELICASE_ATP_BIND_1"/>
    <property type="match status" value="1"/>
</dbReference>
<dbReference type="PROSITE" id="PS51194">
    <property type="entry name" value="HELICASE_CTER"/>
    <property type="match status" value="1"/>
</dbReference>
<dbReference type="PROSITE" id="PS50304">
    <property type="entry name" value="TUDOR"/>
    <property type="match status" value="1"/>
</dbReference>
<comment type="function">
    <text evidence="1">Probable ATP-binding RNA helicase which plays a central role during spermatogenesis and oogenesis by repressing transposable elements and preventing their mobilization, which is essential for the germline integrity. Acts via the piRNA metabolic process, which mediates the repression of transposable elements during meiosis by forming complexes composed of piRNAs and Piwi and govern the methylation and subsequent repression of transposons. Involved in the repression of LTR retrotransposon copia. Also involved in telomere regulation by repressing specialized telomeric retroelements HeT-A, TAHRE, and TART; Drosophila telomeres being maintained by transposition of specialized telomeric retroelements. Involved in telomeric trans-silencing, a repression mechanism by which a transposon or a transgene inserted in subtelomeric heterochromatin has the capacity to repress in trans in the female germline, a homologous transposon, or transgene located in euchromatin. Involved in the repression of testis-expressed Stellate genes by the homologous Su(Ste) repeats. Required for anteroposterior and dorsoventral axis formation during oogenesis (By similarity).</text>
</comment>
<comment type="catalytic activity">
    <reaction>
        <text>ATP + H2O = ADP + phosphate + H(+)</text>
        <dbReference type="Rhea" id="RHEA:13065"/>
        <dbReference type="ChEBI" id="CHEBI:15377"/>
        <dbReference type="ChEBI" id="CHEBI:15378"/>
        <dbReference type="ChEBI" id="CHEBI:30616"/>
        <dbReference type="ChEBI" id="CHEBI:43474"/>
        <dbReference type="ChEBI" id="CHEBI:456216"/>
        <dbReference type="EC" id="3.6.4.13"/>
    </reaction>
</comment>
<comment type="subcellular location">
    <subcellularLocation>
        <location evidence="1">Cytoplasm</location>
    </subcellularLocation>
    <text evidence="1">Component of the nuage, also named P granule, a germ-cell-specific organelle required to repress transposon during meiosis.</text>
</comment>
<comment type="similarity">
    <text evidence="5">Belongs to the DEAD box helicase family. DEAH subfamily.</text>
</comment>
<evidence type="ECO:0000250" key="1"/>
<evidence type="ECO:0000255" key="2">
    <source>
        <dbReference type="PROSITE-ProRule" id="PRU00211"/>
    </source>
</evidence>
<evidence type="ECO:0000255" key="3">
    <source>
        <dbReference type="PROSITE-ProRule" id="PRU00541"/>
    </source>
</evidence>
<evidence type="ECO:0000255" key="4">
    <source>
        <dbReference type="PROSITE-ProRule" id="PRU00542"/>
    </source>
</evidence>
<evidence type="ECO:0000305" key="5"/>
<reference key="1">
    <citation type="journal article" date="2007" name="Nature">
        <title>Evolution of genes and genomes on the Drosophila phylogeny.</title>
        <authorList>
            <consortium name="Drosophila 12 genomes consortium"/>
        </authorList>
    </citation>
    <scope>NUCLEOTIDE SEQUENCE [LARGE SCALE GENOMIC DNA]</scope>
    <source>
        <strain>MSH-3 / Tucson 14011-0111.49</strain>
    </source>
</reference>
<protein>
    <recommendedName>
        <fullName>Probable ATP-dependent RNA helicase spindle-E</fullName>
        <ecNumber>3.6.4.13</ecNumber>
    </recommendedName>
    <alternativeName>
        <fullName>Homeless</fullName>
    </alternativeName>
</protein>